<feature type="chain" id="PRO_1000128801" description="Large ribosomal subunit protein bL27">
    <location>
        <begin position="1"/>
        <end position="85"/>
    </location>
</feature>
<feature type="region of interest" description="Disordered" evidence="2">
    <location>
        <begin position="1"/>
        <end position="20"/>
    </location>
</feature>
<accession>B5FIN4</accession>
<gene>
    <name evidence="1" type="primary">rpmA</name>
    <name type="ordered locus">SeD_A3662</name>
</gene>
<comment type="similarity">
    <text evidence="1">Belongs to the bacterial ribosomal protein bL27 family.</text>
</comment>
<keyword id="KW-0687">Ribonucleoprotein</keyword>
<keyword id="KW-0689">Ribosomal protein</keyword>
<name>RL27_SALDC</name>
<organism>
    <name type="scientific">Salmonella dublin (strain CT_02021853)</name>
    <dbReference type="NCBI Taxonomy" id="439851"/>
    <lineage>
        <taxon>Bacteria</taxon>
        <taxon>Pseudomonadati</taxon>
        <taxon>Pseudomonadota</taxon>
        <taxon>Gammaproteobacteria</taxon>
        <taxon>Enterobacterales</taxon>
        <taxon>Enterobacteriaceae</taxon>
        <taxon>Salmonella</taxon>
    </lineage>
</organism>
<protein>
    <recommendedName>
        <fullName evidence="1">Large ribosomal subunit protein bL27</fullName>
    </recommendedName>
    <alternativeName>
        <fullName evidence="3">50S ribosomal protein L27</fullName>
    </alternativeName>
</protein>
<sequence length="85" mass="9125">MAHKKAGGSTRNGRDSEAKRLGVKRFGGEAVLAGSIIVRQRGTKFHAGTNVGCGRDHTLFAKADGKVKFEVKGPKNRKYISIVAE</sequence>
<dbReference type="EMBL" id="CP001144">
    <property type="protein sequence ID" value="ACH77248.1"/>
    <property type="molecule type" value="Genomic_DNA"/>
</dbReference>
<dbReference type="RefSeq" id="WP_000940593.1">
    <property type="nucleotide sequence ID" value="NC_011205.1"/>
</dbReference>
<dbReference type="SMR" id="B5FIN4"/>
<dbReference type="GeneID" id="66757642"/>
<dbReference type="KEGG" id="sed:SeD_A3662"/>
<dbReference type="HOGENOM" id="CLU_095424_4_1_6"/>
<dbReference type="Proteomes" id="UP000008322">
    <property type="component" value="Chromosome"/>
</dbReference>
<dbReference type="GO" id="GO:0022625">
    <property type="term" value="C:cytosolic large ribosomal subunit"/>
    <property type="evidence" value="ECO:0007669"/>
    <property type="project" value="TreeGrafter"/>
</dbReference>
<dbReference type="GO" id="GO:0003735">
    <property type="term" value="F:structural constituent of ribosome"/>
    <property type="evidence" value="ECO:0007669"/>
    <property type="project" value="InterPro"/>
</dbReference>
<dbReference type="GO" id="GO:0006412">
    <property type="term" value="P:translation"/>
    <property type="evidence" value="ECO:0007669"/>
    <property type="project" value="UniProtKB-UniRule"/>
</dbReference>
<dbReference type="FunFam" id="2.40.50.100:FF:000001">
    <property type="entry name" value="50S ribosomal protein L27"/>
    <property type="match status" value="1"/>
</dbReference>
<dbReference type="Gene3D" id="2.40.50.100">
    <property type="match status" value="1"/>
</dbReference>
<dbReference type="HAMAP" id="MF_00539">
    <property type="entry name" value="Ribosomal_bL27"/>
    <property type="match status" value="1"/>
</dbReference>
<dbReference type="InterPro" id="IPR001684">
    <property type="entry name" value="Ribosomal_bL27"/>
</dbReference>
<dbReference type="InterPro" id="IPR018261">
    <property type="entry name" value="Ribosomal_bL27_CS"/>
</dbReference>
<dbReference type="NCBIfam" id="TIGR00062">
    <property type="entry name" value="L27"/>
    <property type="match status" value="1"/>
</dbReference>
<dbReference type="PANTHER" id="PTHR15893:SF0">
    <property type="entry name" value="LARGE RIBOSOMAL SUBUNIT PROTEIN BL27M"/>
    <property type="match status" value="1"/>
</dbReference>
<dbReference type="PANTHER" id="PTHR15893">
    <property type="entry name" value="RIBOSOMAL PROTEIN L27"/>
    <property type="match status" value="1"/>
</dbReference>
<dbReference type="Pfam" id="PF01016">
    <property type="entry name" value="Ribosomal_L27"/>
    <property type="match status" value="1"/>
</dbReference>
<dbReference type="PRINTS" id="PR00063">
    <property type="entry name" value="RIBOSOMALL27"/>
</dbReference>
<dbReference type="SUPFAM" id="SSF110324">
    <property type="entry name" value="Ribosomal L27 protein-like"/>
    <property type="match status" value="1"/>
</dbReference>
<dbReference type="PROSITE" id="PS00831">
    <property type="entry name" value="RIBOSOMAL_L27"/>
    <property type="match status" value="1"/>
</dbReference>
<proteinExistence type="inferred from homology"/>
<evidence type="ECO:0000255" key="1">
    <source>
        <dbReference type="HAMAP-Rule" id="MF_00539"/>
    </source>
</evidence>
<evidence type="ECO:0000256" key="2">
    <source>
        <dbReference type="SAM" id="MobiDB-lite"/>
    </source>
</evidence>
<evidence type="ECO:0000305" key="3"/>
<reference key="1">
    <citation type="journal article" date="2011" name="J. Bacteriol.">
        <title>Comparative genomics of 28 Salmonella enterica isolates: evidence for CRISPR-mediated adaptive sublineage evolution.</title>
        <authorList>
            <person name="Fricke W.F."/>
            <person name="Mammel M.K."/>
            <person name="McDermott P.F."/>
            <person name="Tartera C."/>
            <person name="White D.G."/>
            <person name="Leclerc J.E."/>
            <person name="Ravel J."/>
            <person name="Cebula T.A."/>
        </authorList>
    </citation>
    <scope>NUCLEOTIDE SEQUENCE [LARGE SCALE GENOMIC DNA]</scope>
    <source>
        <strain>CT_02021853</strain>
    </source>
</reference>